<name>RL14_CHLPD</name>
<gene>
    <name evidence="1" type="primary">rplN</name>
    <name type="ordered locus">Cpha266_2413</name>
</gene>
<evidence type="ECO:0000255" key="1">
    <source>
        <dbReference type="HAMAP-Rule" id="MF_01367"/>
    </source>
</evidence>
<evidence type="ECO:0000305" key="2"/>
<dbReference type="EMBL" id="CP000492">
    <property type="protein sequence ID" value="ABL66401.1"/>
    <property type="molecule type" value="Genomic_DNA"/>
</dbReference>
<dbReference type="RefSeq" id="WP_011746183.1">
    <property type="nucleotide sequence ID" value="NC_008639.1"/>
</dbReference>
<dbReference type="SMR" id="A1BJ24"/>
<dbReference type="STRING" id="290317.Cpha266_2413"/>
<dbReference type="KEGG" id="cph:Cpha266_2413"/>
<dbReference type="eggNOG" id="COG0093">
    <property type="taxonomic scope" value="Bacteria"/>
</dbReference>
<dbReference type="HOGENOM" id="CLU_095071_2_1_10"/>
<dbReference type="OrthoDB" id="9806379at2"/>
<dbReference type="Proteomes" id="UP000008701">
    <property type="component" value="Chromosome"/>
</dbReference>
<dbReference type="GO" id="GO:0022625">
    <property type="term" value="C:cytosolic large ribosomal subunit"/>
    <property type="evidence" value="ECO:0007669"/>
    <property type="project" value="TreeGrafter"/>
</dbReference>
<dbReference type="GO" id="GO:0070180">
    <property type="term" value="F:large ribosomal subunit rRNA binding"/>
    <property type="evidence" value="ECO:0007669"/>
    <property type="project" value="TreeGrafter"/>
</dbReference>
<dbReference type="GO" id="GO:0003735">
    <property type="term" value="F:structural constituent of ribosome"/>
    <property type="evidence" value="ECO:0007669"/>
    <property type="project" value="InterPro"/>
</dbReference>
<dbReference type="GO" id="GO:0006412">
    <property type="term" value="P:translation"/>
    <property type="evidence" value="ECO:0007669"/>
    <property type="project" value="UniProtKB-UniRule"/>
</dbReference>
<dbReference type="CDD" id="cd00337">
    <property type="entry name" value="Ribosomal_uL14"/>
    <property type="match status" value="1"/>
</dbReference>
<dbReference type="FunFam" id="2.40.150.20:FF:000001">
    <property type="entry name" value="50S ribosomal protein L14"/>
    <property type="match status" value="1"/>
</dbReference>
<dbReference type="Gene3D" id="2.40.150.20">
    <property type="entry name" value="Ribosomal protein L14"/>
    <property type="match status" value="1"/>
</dbReference>
<dbReference type="HAMAP" id="MF_01367">
    <property type="entry name" value="Ribosomal_uL14"/>
    <property type="match status" value="1"/>
</dbReference>
<dbReference type="InterPro" id="IPR000218">
    <property type="entry name" value="Ribosomal_uL14"/>
</dbReference>
<dbReference type="InterPro" id="IPR005745">
    <property type="entry name" value="Ribosomal_uL14_bac-type"/>
</dbReference>
<dbReference type="InterPro" id="IPR019972">
    <property type="entry name" value="Ribosomal_uL14_CS"/>
</dbReference>
<dbReference type="InterPro" id="IPR036853">
    <property type="entry name" value="Ribosomal_uL14_sf"/>
</dbReference>
<dbReference type="NCBIfam" id="TIGR01067">
    <property type="entry name" value="rplN_bact"/>
    <property type="match status" value="1"/>
</dbReference>
<dbReference type="PANTHER" id="PTHR11761">
    <property type="entry name" value="50S/60S RIBOSOMAL PROTEIN L14/L23"/>
    <property type="match status" value="1"/>
</dbReference>
<dbReference type="PANTHER" id="PTHR11761:SF3">
    <property type="entry name" value="LARGE RIBOSOMAL SUBUNIT PROTEIN UL14M"/>
    <property type="match status" value="1"/>
</dbReference>
<dbReference type="Pfam" id="PF00238">
    <property type="entry name" value="Ribosomal_L14"/>
    <property type="match status" value="1"/>
</dbReference>
<dbReference type="SMART" id="SM01374">
    <property type="entry name" value="Ribosomal_L14"/>
    <property type="match status" value="1"/>
</dbReference>
<dbReference type="SUPFAM" id="SSF50193">
    <property type="entry name" value="Ribosomal protein L14"/>
    <property type="match status" value="1"/>
</dbReference>
<dbReference type="PROSITE" id="PS00049">
    <property type="entry name" value="RIBOSOMAL_L14"/>
    <property type="match status" value="1"/>
</dbReference>
<sequence>MIQKETNLVVADNSGAKKVRCIHVFGGTGRRYAALGDQIIVSIKAAVPGGVVKKKDVCKAVVVRCVKEQRRKDGSYIRFDENAVVLLNAQGEPRGTRIFGPVARELRDRKYMKIVSLAPEVL</sequence>
<comment type="function">
    <text evidence="1">Binds to 23S rRNA. Forms part of two intersubunit bridges in the 70S ribosome.</text>
</comment>
<comment type="subunit">
    <text evidence="1">Part of the 50S ribosomal subunit. Forms a cluster with proteins L3 and L19. In the 70S ribosome, L14 and L19 interact and together make contacts with the 16S rRNA in bridges B5 and B8.</text>
</comment>
<comment type="similarity">
    <text evidence="1">Belongs to the universal ribosomal protein uL14 family.</text>
</comment>
<feature type="chain" id="PRO_1000055552" description="Large ribosomal subunit protein uL14">
    <location>
        <begin position="1"/>
        <end position="122"/>
    </location>
</feature>
<keyword id="KW-1185">Reference proteome</keyword>
<keyword id="KW-0687">Ribonucleoprotein</keyword>
<keyword id="KW-0689">Ribosomal protein</keyword>
<keyword id="KW-0694">RNA-binding</keyword>
<keyword id="KW-0699">rRNA-binding</keyword>
<protein>
    <recommendedName>
        <fullName evidence="1">Large ribosomal subunit protein uL14</fullName>
    </recommendedName>
    <alternativeName>
        <fullName evidence="2">50S ribosomal protein L14</fullName>
    </alternativeName>
</protein>
<proteinExistence type="inferred from homology"/>
<reference key="1">
    <citation type="submission" date="2006-12" db="EMBL/GenBank/DDBJ databases">
        <title>Complete sequence of Chlorobium phaeobacteroides DSM 266.</title>
        <authorList>
            <consortium name="US DOE Joint Genome Institute"/>
            <person name="Copeland A."/>
            <person name="Lucas S."/>
            <person name="Lapidus A."/>
            <person name="Barry K."/>
            <person name="Detter J.C."/>
            <person name="Glavina del Rio T."/>
            <person name="Hammon N."/>
            <person name="Israni S."/>
            <person name="Pitluck S."/>
            <person name="Goltsman E."/>
            <person name="Schmutz J."/>
            <person name="Larimer F."/>
            <person name="Land M."/>
            <person name="Hauser L."/>
            <person name="Mikhailova N."/>
            <person name="Li T."/>
            <person name="Overmann J."/>
            <person name="Bryant D.A."/>
            <person name="Richardson P."/>
        </authorList>
    </citation>
    <scope>NUCLEOTIDE SEQUENCE [LARGE SCALE GENOMIC DNA]</scope>
    <source>
        <strain>DSM 266 / SMG 266 / 2430</strain>
    </source>
</reference>
<organism>
    <name type="scientific">Chlorobium phaeobacteroides (strain DSM 266 / SMG 266 / 2430)</name>
    <dbReference type="NCBI Taxonomy" id="290317"/>
    <lineage>
        <taxon>Bacteria</taxon>
        <taxon>Pseudomonadati</taxon>
        <taxon>Chlorobiota</taxon>
        <taxon>Chlorobiia</taxon>
        <taxon>Chlorobiales</taxon>
        <taxon>Chlorobiaceae</taxon>
        <taxon>Chlorobium/Pelodictyon group</taxon>
        <taxon>Chlorobium</taxon>
    </lineage>
</organism>
<accession>A1BJ24</accession>